<proteinExistence type="evidence at protein level"/>
<name>ATPI1_ACTTE</name>
<evidence type="ECO:0000250" key="1">
    <source>
        <dbReference type="UniProtKB" id="P0DMW6"/>
    </source>
</evidence>
<evidence type="ECO:0000255" key="2"/>
<evidence type="ECO:0000255" key="3">
    <source>
        <dbReference type="PROSITE-ProRule" id="PRU00031"/>
    </source>
</evidence>
<evidence type="ECO:0000269" key="4">
    <source>
    </source>
</evidence>
<evidence type="ECO:0000303" key="5">
    <source>
    </source>
</evidence>
<evidence type="ECO:0000305" key="6"/>
<evidence type="ECO:0000305" key="7">
    <source>
    </source>
</evidence>
<evidence type="ECO:0000312" key="8">
    <source>
        <dbReference type="Proteomes" id="UP000515163"/>
    </source>
</evidence>
<accession>A0A6P8HC43</accession>
<organism>
    <name type="scientific">Actinia tenebrosa</name>
    <name type="common">Australian red waratah sea anemone</name>
    <dbReference type="NCBI Taxonomy" id="6105"/>
    <lineage>
        <taxon>Eukaryota</taxon>
        <taxon>Metazoa</taxon>
        <taxon>Cnidaria</taxon>
        <taxon>Anthozoa</taxon>
        <taxon>Hexacorallia</taxon>
        <taxon>Actiniaria</taxon>
        <taxon>Actiniidae</taxon>
        <taxon>Actinia</taxon>
    </lineage>
</organism>
<sequence length="285" mass="32113">MARTASTILFLLCLVLITGYTMARQEHCNLPLEKGKCGGRFERFYYNSHKGKCESFFYGGCSGNDNNFENEEECDKACGAFMTMADANSFCNLPAVVGRCKGYFPRYFYNTEAGKCQRFIYGGCGGNRNNFETVXDCRATCHPREKRALADMTMADANSFCQLPAVVGRCRGRFPRYYYNTEAGKCQRFIYGGCXGNRNNFETVEDCRATCHPREKRALADMTMADANSFCQLPAVVGKCRGYFPRYYYNTEAGKCQQFIYGGCGGNRNNFETVEDCRATCHSHA</sequence>
<reference evidence="8" key="1">
    <citation type="journal article" date="2019" name="Ecol. Evol.">
        <title>The draft genome of Actinia tenebrosa reveals insights into toxin evolution.</title>
        <authorList>
            <person name="Surm J.M."/>
            <person name="Stewart Z.K."/>
            <person name="Papanicolaou A."/>
            <person name="Pavasovic A."/>
            <person name="Prentis P.J."/>
        </authorList>
    </citation>
    <scope>NUCLEOTIDE SEQUENCE [LARGE SCALE GENOMIC DNA]</scope>
</reference>
<reference key="2">
    <citation type="journal article" date="2019" name="Mar. Drugs">
        <title>A versatile and robust serine protease inhibitor scaffold from Actinia tenebrosa.</title>
        <authorList>
            <person name="Chen X."/>
            <person name="Leahy D."/>
            <person name="Van Haeften J."/>
            <person name="Hartfield P."/>
            <person name="Prentis P.J."/>
            <person name="van der Burg C.A."/>
            <person name="Surm J.M."/>
            <person name="Pavasovic A."/>
            <person name="Madio B."/>
            <person name="Hamilton B.R."/>
            <person name="King G.F."/>
            <person name="Undheim E.A.B."/>
            <person name="Brattsand M."/>
            <person name="Harris J.M."/>
        </authorList>
    </citation>
    <scope>PROTEIN SEQUENCE OF 88-145 AND 226-285</scope>
    <scope>FUNCTION</scope>
    <scope>MASS SPECTROMETRY</scope>
    <scope>BIOPHYSICOCHEMICAL PROPERTIES</scope>
    <scope>TISSUE SPECIFICITY</scope>
    <scope>3D-STRUCTURE MODELING IN COMPLEX WITH SUBSTRATES</scope>
</reference>
<comment type="function">
    <molecule>ATPI-I</molecule>
    <text evidence="4 7">May be involved in regulating functions and processes within the digestive system (Probable). Shows serine protease inhibitory activities (PubMed:31842369). Strongly inhibits trypsin (Ki=0.05 nM), chymotrypsin (Ki=7.4 nM), and kallikreins (KLK5, KLK7 and KLK14) (PubMed:31842369).</text>
</comment>
<comment type="function">
    <molecule>ATPI-II</molecule>
    <text evidence="4 7">May be involved in regulating functions and processes within the digestive system (Probable). Shows serine protease inhibitory activities (PubMed:31842369). Strongly inhibits trypsin (Ki=0.08 nM), chymotrypsin (Ki=2.9 nM), and kallikreins (KLK5, KLK7 and KLK14) (PubMed:31842369).</text>
</comment>
<comment type="biophysicochemical properties">
    <molecule>ATPI-I</molecule>
    <temperatureDependence>
        <text evidence="4">Is resistant to heat-induced denaturation (95 degrees Celsius).</text>
    </temperatureDependence>
</comment>
<comment type="subcellular location">
    <subcellularLocation>
        <location evidence="1">Secreted</location>
    </subcellularLocation>
    <subcellularLocation>
        <location evidence="1">Nematocyst</location>
    </subcellularLocation>
</comment>
<comment type="tissue specificity">
    <molecule>ATPI-I</molecule>
    <text evidence="4">Mostly expressed in the mesenterial filaments, with relatively low levels (3-4 fold) of expression in the acrorhagi. Expression levels in tentacles are detectable, but very low.</text>
</comment>
<comment type="mass spectrometry" mass="6719.9" method="MALDI" evidence="4">
    <molecule>ATPI-I</molecule>
    <text>Average mass.</text>
</comment>
<comment type="mass spectrometry" mass="6606.5" method="MALDI" evidence="4">
    <molecule>ATPI-II</molecule>
    <text>Average mass.</text>
</comment>
<comment type="similarity">
    <text evidence="6">Belongs to the venom Kunitz-type family. Sea anemone type 2 potassium channel toxin subfamily.</text>
</comment>
<dbReference type="RefSeq" id="XP_031550075.1">
    <property type="nucleotide sequence ID" value="XM_031694215.1"/>
</dbReference>
<dbReference type="FunCoup" id="A0A6P8HC43">
    <property type="interactions" value="192"/>
</dbReference>
<dbReference type="EnsemblMetazoa" id="XM_031694215.1">
    <property type="protein sequence ID" value="XP_031550075.1"/>
    <property type="gene ID" value="LOC116287532"/>
</dbReference>
<dbReference type="GeneID" id="116287532"/>
<dbReference type="InParanoid" id="A0A6P8HC43"/>
<dbReference type="OrthoDB" id="5950222at2759"/>
<dbReference type="Proteomes" id="UP000515163">
    <property type="component" value="Unplaced"/>
</dbReference>
<dbReference type="GO" id="GO:0005615">
    <property type="term" value="C:extracellular space"/>
    <property type="evidence" value="ECO:0007669"/>
    <property type="project" value="TreeGrafter"/>
</dbReference>
<dbReference type="GO" id="GO:0042151">
    <property type="term" value="C:nematocyst"/>
    <property type="evidence" value="ECO:0007669"/>
    <property type="project" value="UniProtKB-SubCell"/>
</dbReference>
<dbReference type="GO" id="GO:0015459">
    <property type="term" value="F:potassium channel regulator activity"/>
    <property type="evidence" value="ECO:0007669"/>
    <property type="project" value="UniProtKB-KW"/>
</dbReference>
<dbReference type="GO" id="GO:0004867">
    <property type="term" value="F:serine-type endopeptidase inhibitor activity"/>
    <property type="evidence" value="ECO:0007669"/>
    <property type="project" value="UniProtKB-KW"/>
</dbReference>
<dbReference type="GO" id="GO:0090729">
    <property type="term" value="F:toxin activity"/>
    <property type="evidence" value="ECO:0007669"/>
    <property type="project" value="UniProtKB-KW"/>
</dbReference>
<dbReference type="CDD" id="cd00109">
    <property type="entry name" value="Kunitz-type"/>
    <property type="match status" value="4"/>
</dbReference>
<dbReference type="FunFam" id="4.10.410.10:FF:000021">
    <property type="entry name" value="Serine protease inhibitor, putative"/>
    <property type="match status" value="3"/>
</dbReference>
<dbReference type="Gene3D" id="4.10.410.10">
    <property type="entry name" value="Pancreatic trypsin inhibitor Kunitz domain"/>
    <property type="match status" value="4"/>
</dbReference>
<dbReference type="InterPro" id="IPR002223">
    <property type="entry name" value="Kunitz_BPTI"/>
</dbReference>
<dbReference type="InterPro" id="IPR036880">
    <property type="entry name" value="Kunitz_BPTI_sf"/>
</dbReference>
<dbReference type="InterPro" id="IPR020901">
    <property type="entry name" value="Prtase_inh_Kunz-CS"/>
</dbReference>
<dbReference type="InterPro" id="IPR050098">
    <property type="entry name" value="TFPI/VKTCI-like"/>
</dbReference>
<dbReference type="PANTHER" id="PTHR10083">
    <property type="entry name" value="KUNITZ-TYPE PROTEASE INHIBITOR-RELATED"/>
    <property type="match status" value="1"/>
</dbReference>
<dbReference type="PANTHER" id="PTHR10083:SF328">
    <property type="entry name" value="TISSUE FACTOR PATHWAY INHIBITOR"/>
    <property type="match status" value="1"/>
</dbReference>
<dbReference type="Pfam" id="PF00014">
    <property type="entry name" value="Kunitz_BPTI"/>
    <property type="match status" value="4"/>
</dbReference>
<dbReference type="PRINTS" id="PR00759">
    <property type="entry name" value="BASICPTASE"/>
</dbReference>
<dbReference type="SMART" id="SM00131">
    <property type="entry name" value="KU"/>
    <property type="match status" value="4"/>
</dbReference>
<dbReference type="SUPFAM" id="SSF57362">
    <property type="entry name" value="BPTI-like"/>
    <property type="match status" value="4"/>
</dbReference>
<dbReference type="PROSITE" id="PS00280">
    <property type="entry name" value="BPTI_KUNITZ_1"/>
    <property type="match status" value="4"/>
</dbReference>
<dbReference type="PROSITE" id="PS50279">
    <property type="entry name" value="BPTI_KUNITZ_2"/>
    <property type="match status" value="4"/>
</dbReference>
<keyword id="KW-0165">Cleavage on pair of basic residues</keyword>
<keyword id="KW-0903">Direct protein sequencing</keyword>
<keyword id="KW-1015">Disulfide bond</keyword>
<keyword id="KW-0872">Ion channel impairing toxin</keyword>
<keyword id="KW-0166">Nematocyst</keyword>
<keyword id="KW-0632">Potassium channel impairing toxin</keyword>
<keyword id="KW-0646">Protease inhibitor</keyword>
<keyword id="KW-1185">Reference proteome</keyword>
<keyword id="KW-0677">Repeat</keyword>
<keyword id="KW-0964">Secreted</keyword>
<keyword id="KW-0722">Serine protease inhibitor</keyword>
<keyword id="KW-0732">Signal</keyword>
<keyword id="KW-0800">Toxin</keyword>
<protein>
    <recommendedName>
        <fullName evidence="5">Actinia tenebrosa protease inhibitors</fullName>
    </recommendedName>
    <alternativeName>
        <fullName>Carboxypeptidase inhibitor SmCI-like</fullName>
    </alternativeName>
    <component>
        <recommendedName>
            <fullName evidence="5">ATPI-I</fullName>
        </recommendedName>
    </component>
    <component>
        <recommendedName>
            <fullName evidence="5">ATPI-II</fullName>
        </recommendedName>
    </component>
</protein>
<feature type="signal peptide" evidence="2">
    <location>
        <begin position="1"/>
        <end position="23"/>
    </location>
</feature>
<feature type="propeptide" id="PRO_0000452711" evidence="6">
    <location>
        <begin position="24"/>
        <end position="87"/>
    </location>
</feature>
<feature type="chain" id="PRO_0000452712" description="ATPI-II" evidence="4">
    <location>
        <begin position="88"/>
        <end position="145"/>
    </location>
</feature>
<feature type="propeptide" id="PRO_0000452713" evidence="6">
    <location>
        <begin position="146"/>
        <end position="225"/>
    </location>
</feature>
<feature type="chain" id="PRO_5028159550" description="ATPI-I" evidence="4">
    <location>
        <begin position="226"/>
        <end position="285"/>
    </location>
</feature>
<feature type="domain" description="BPTI/Kunitz inhibitor 1" evidence="3">
    <location>
        <begin position="28"/>
        <end position="78"/>
    </location>
</feature>
<feature type="domain" description="BPTI/Kunitz inhibitor 2" evidence="3">
    <location>
        <begin position="91"/>
        <end position="141"/>
    </location>
</feature>
<feature type="domain" description="BPTI/Kunitz inhibitor 3" evidence="3">
    <location>
        <begin position="161"/>
        <end position="211"/>
    </location>
</feature>
<feature type="domain" description="BPTI/Kunitz inhibitor 4" evidence="3">
    <location>
        <begin position="231"/>
        <end position="281"/>
    </location>
</feature>
<feature type="disulfide bond" evidence="3">
    <location>
        <begin position="28"/>
        <end position="78"/>
    </location>
</feature>
<feature type="disulfide bond" evidence="3">
    <location>
        <begin position="37"/>
        <end position="61"/>
    </location>
</feature>
<feature type="disulfide bond" evidence="3">
    <location>
        <begin position="53"/>
        <end position="74"/>
    </location>
</feature>
<feature type="disulfide bond" evidence="3">
    <location>
        <begin position="91"/>
        <end position="141"/>
    </location>
</feature>
<feature type="disulfide bond" evidence="3">
    <location>
        <begin position="100"/>
        <end position="124"/>
    </location>
</feature>
<feature type="disulfide bond" evidence="3">
    <location>
        <begin position="116"/>
        <end position="137"/>
    </location>
</feature>
<feature type="disulfide bond" evidence="3">
    <location>
        <begin position="161"/>
        <end position="211"/>
    </location>
</feature>
<feature type="disulfide bond" evidence="3">
    <location>
        <begin position="170"/>
        <end position="194"/>
    </location>
</feature>
<feature type="disulfide bond" evidence="3">
    <location>
        <begin position="186"/>
        <end position="207"/>
    </location>
</feature>
<feature type="disulfide bond" evidence="3">
    <location>
        <begin position="231"/>
        <end position="281"/>
    </location>
</feature>
<feature type="disulfide bond" evidence="3">
    <location>
        <begin position="240"/>
        <end position="264"/>
    </location>
</feature>
<feature type="disulfide bond" evidence="3">
    <location>
        <begin position="256"/>
        <end position="277"/>
    </location>
</feature>